<protein>
    <recommendedName>
        <fullName evidence="1">Anthranilate phosphoribosyltransferase</fullName>
        <ecNumber evidence="1">2.4.2.18</ecNumber>
    </recommendedName>
</protein>
<keyword id="KW-0028">Amino-acid biosynthesis</keyword>
<keyword id="KW-0057">Aromatic amino acid biosynthesis</keyword>
<keyword id="KW-0328">Glycosyltransferase</keyword>
<keyword id="KW-0460">Magnesium</keyword>
<keyword id="KW-0479">Metal-binding</keyword>
<keyword id="KW-0808">Transferase</keyword>
<keyword id="KW-0822">Tryptophan biosynthesis</keyword>
<proteinExistence type="inferred from homology"/>
<dbReference type="EC" id="2.4.2.18" evidence="1"/>
<dbReference type="EMBL" id="CP000875">
    <property type="protein sequence ID" value="ABX05326.1"/>
    <property type="molecule type" value="Genomic_DNA"/>
</dbReference>
<dbReference type="SMR" id="A9B148"/>
<dbReference type="FunCoup" id="A9B148">
    <property type="interactions" value="465"/>
</dbReference>
<dbReference type="STRING" id="316274.Haur_2688"/>
<dbReference type="KEGG" id="hau:Haur_2688"/>
<dbReference type="eggNOG" id="COG0547">
    <property type="taxonomic scope" value="Bacteria"/>
</dbReference>
<dbReference type="HOGENOM" id="CLU_034315_2_1_0"/>
<dbReference type="InParanoid" id="A9B148"/>
<dbReference type="UniPathway" id="UPA00035">
    <property type="reaction ID" value="UER00041"/>
</dbReference>
<dbReference type="Proteomes" id="UP000000787">
    <property type="component" value="Chromosome"/>
</dbReference>
<dbReference type="GO" id="GO:0005829">
    <property type="term" value="C:cytosol"/>
    <property type="evidence" value="ECO:0007669"/>
    <property type="project" value="TreeGrafter"/>
</dbReference>
<dbReference type="GO" id="GO:0004048">
    <property type="term" value="F:anthranilate phosphoribosyltransferase activity"/>
    <property type="evidence" value="ECO:0007669"/>
    <property type="project" value="UniProtKB-UniRule"/>
</dbReference>
<dbReference type="GO" id="GO:0000287">
    <property type="term" value="F:magnesium ion binding"/>
    <property type="evidence" value="ECO:0007669"/>
    <property type="project" value="UniProtKB-UniRule"/>
</dbReference>
<dbReference type="GO" id="GO:0000162">
    <property type="term" value="P:L-tryptophan biosynthetic process"/>
    <property type="evidence" value="ECO:0007669"/>
    <property type="project" value="UniProtKB-UniRule"/>
</dbReference>
<dbReference type="FunFam" id="3.40.1030.10:FF:000002">
    <property type="entry name" value="Anthranilate phosphoribosyltransferase"/>
    <property type="match status" value="1"/>
</dbReference>
<dbReference type="Gene3D" id="3.40.1030.10">
    <property type="entry name" value="Nucleoside phosphorylase/phosphoribosyltransferase catalytic domain"/>
    <property type="match status" value="1"/>
</dbReference>
<dbReference type="Gene3D" id="1.20.970.10">
    <property type="entry name" value="Transferase, Pyrimidine Nucleoside Phosphorylase, Chain C"/>
    <property type="match status" value="1"/>
</dbReference>
<dbReference type="HAMAP" id="MF_00211">
    <property type="entry name" value="TrpD"/>
    <property type="match status" value="1"/>
</dbReference>
<dbReference type="InterPro" id="IPR005940">
    <property type="entry name" value="Anthranilate_Pribosyl_Tfrase"/>
</dbReference>
<dbReference type="InterPro" id="IPR000312">
    <property type="entry name" value="Glycosyl_Trfase_fam3"/>
</dbReference>
<dbReference type="InterPro" id="IPR017459">
    <property type="entry name" value="Glycosyl_Trfase_fam3_N_dom"/>
</dbReference>
<dbReference type="InterPro" id="IPR036320">
    <property type="entry name" value="Glycosyl_Trfase_fam3_N_dom_sf"/>
</dbReference>
<dbReference type="InterPro" id="IPR035902">
    <property type="entry name" value="Nuc_phospho_transferase"/>
</dbReference>
<dbReference type="NCBIfam" id="TIGR01245">
    <property type="entry name" value="trpD"/>
    <property type="match status" value="1"/>
</dbReference>
<dbReference type="PANTHER" id="PTHR43285">
    <property type="entry name" value="ANTHRANILATE PHOSPHORIBOSYLTRANSFERASE"/>
    <property type="match status" value="1"/>
</dbReference>
<dbReference type="PANTHER" id="PTHR43285:SF2">
    <property type="entry name" value="ANTHRANILATE PHOSPHORIBOSYLTRANSFERASE"/>
    <property type="match status" value="1"/>
</dbReference>
<dbReference type="Pfam" id="PF02885">
    <property type="entry name" value="Glycos_trans_3N"/>
    <property type="match status" value="1"/>
</dbReference>
<dbReference type="Pfam" id="PF00591">
    <property type="entry name" value="Glycos_transf_3"/>
    <property type="match status" value="1"/>
</dbReference>
<dbReference type="SUPFAM" id="SSF52418">
    <property type="entry name" value="Nucleoside phosphorylase/phosphoribosyltransferase catalytic domain"/>
    <property type="match status" value="1"/>
</dbReference>
<dbReference type="SUPFAM" id="SSF47648">
    <property type="entry name" value="Nucleoside phosphorylase/phosphoribosyltransferase N-terminal domain"/>
    <property type="match status" value="1"/>
</dbReference>
<organism>
    <name type="scientific">Herpetosiphon aurantiacus (strain ATCC 23779 / DSM 785 / 114-95)</name>
    <dbReference type="NCBI Taxonomy" id="316274"/>
    <lineage>
        <taxon>Bacteria</taxon>
        <taxon>Bacillati</taxon>
        <taxon>Chloroflexota</taxon>
        <taxon>Chloroflexia</taxon>
        <taxon>Herpetosiphonales</taxon>
        <taxon>Herpetosiphonaceae</taxon>
        <taxon>Herpetosiphon</taxon>
    </lineage>
</organism>
<sequence length="338" mass="35004">MQIRDAIITVTNRTDLSQDDAAAVMEQMMNGEATPAQIAALLTALHFKGETDAEIAGMAQVMRAKSLAVPHDGGVVDTCGTGGDHSNTFNISTTAAFVAAGAGATVAKHGNRAMSSKCGSADVLEGLGVNIELDAEGVARCLRQAGIGFMFAPKFHPAMRYAGPVRREIGIRTIFNVLGPLTNPARAEYQVIGVANAGLAEKLANALSKMGIRRALVVHGSDGLDEISISASTLVFDVRAGATPQASTISPSDFGLSLAPREAIAGGSVEENVAMTKAILEGSDTGPRRDIVLLNAAAALVACERADSFGEALRQAQQAIDTGSANQRMQRMIEASNG</sequence>
<gene>
    <name evidence="1" type="primary">trpD</name>
    <name type="ordered locus">Haur_2688</name>
</gene>
<feature type="chain" id="PRO_1000099813" description="Anthranilate phosphoribosyltransferase">
    <location>
        <begin position="1"/>
        <end position="338"/>
    </location>
</feature>
<feature type="binding site" evidence="1">
    <location>
        <position position="80"/>
    </location>
    <ligand>
        <name>5-phospho-alpha-D-ribose 1-diphosphate</name>
        <dbReference type="ChEBI" id="CHEBI:58017"/>
    </ligand>
</feature>
<feature type="binding site" evidence="1">
    <location>
        <position position="80"/>
    </location>
    <ligand>
        <name>anthranilate</name>
        <dbReference type="ChEBI" id="CHEBI:16567"/>
        <label>1</label>
    </ligand>
</feature>
<feature type="binding site" evidence="1">
    <location>
        <begin position="83"/>
        <end position="84"/>
    </location>
    <ligand>
        <name>5-phospho-alpha-D-ribose 1-diphosphate</name>
        <dbReference type="ChEBI" id="CHEBI:58017"/>
    </ligand>
</feature>
<feature type="binding site" evidence="1">
    <location>
        <position position="88"/>
    </location>
    <ligand>
        <name>5-phospho-alpha-D-ribose 1-diphosphate</name>
        <dbReference type="ChEBI" id="CHEBI:58017"/>
    </ligand>
</feature>
<feature type="binding site" evidence="1">
    <location>
        <begin position="90"/>
        <end position="93"/>
    </location>
    <ligand>
        <name>5-phospho-alpha-D-ribose 1-diphosphate</name>
        <dbReference type="ChEBI" id="CHEBI:58017"/>
    </ligand>
</feature>
<feature type="binding site" evidence="1">
    <location>
        <position position="92"/>
    </location>
    <ligand>
        <name>Mg(2+)</name>
        <dbReference type="ChEBI" id="CHEBI:18420"/>
        <label>1</label>
    </ligand>
</feature>
<feature type="binding site" evidence="1">
    <location>
        <begin position="108"/>
        <end position="116"/>
    </location>
    <ligand>
        <name>5-phospho-alpha-D-ribose 1-diphosphate</name>
        <dbReference type="ChEBI" id="CHEBI:58017"/>
    </ligand>
</feature>
<feature type="binding site" evidence="1">
    <location>
        <position position="111"/>
    </location>
    <ligand>
        <name>anthranilate</name>
        <dbReference type="ChEBI" id="CHEBI:16567"/>
        <label>1</label>
    </ligand>
</feature>
<feature type="binding site" evidence="1">
    <location>
        <position position="120"/>
    </location>
    <ligand>
        <name>5-phospho-alpha-D-ribose 1-diphosphate</name>
        <dbReference type="ChEBI" id="CHEBI:58017"/>
    </ligand>
</feature>
<feature type="binding site" evidence="1">
    <location>
        <position position="166"/>
    </location>
    <ligand>
        <name>anthranilate</name>
        <dbReference type="ChEBI" id="CHEBI:16567"/>
        <label>2</label>
    </ligand>
</feature>
<feature type="binding site" evidence="1">
    <location>
        <position position="225"/>
    </location>
    <ligand>
        <name>Mg(2+)</name>
        <dbReference type="ChEBI" id="CHEBI:18420"/>
        <label>2</label>
    </ligand>
</feature>
<feature type="binding site" evidence="1">
    <location>
        <position position="226"/>
    </location>
    <ligand>
        <name>Mg(2+)</name>
        <dbReference type="ChEBI" id="CHEBI:18420"/>
        <label>1</label>
    </ligand>
</feature>
<feature type="binding site" evidence="1">
    <location>
        <position position="226"/>
    </location>
    <ligand>
        <name>Mg(2+)</name>
        <dbReference type="ChEBI" id="CHEBI:18420"/>
        <label>2</label>
    </ligand>
</feature>
<evidence type="ECO:0000255" key="1">
    <source>
        <dbReference type="HAMAP-Rule" id="MF_00211"/>
    </source>
</evidence>
<accession>A9B148</accession>
<name>TRPD_HERA2</name>
<comment type="function">
    <text evidence="1">Catalyzes the transfer of the phosphoribosyl group of 5-phosphorylribose-1-pyrophosphate (PRPP) to anthranilate to yield N-(5'-phosphoribosyl)-anthranilate (PRA).</text>
</comment>
<comment type="catalytic activity">
    <reaction evidence="1">
        <text>N-(5-phospho-beta-D-ribosyl)anthranilate + diphosphate = 5-phospho-alpha-D-ribose 1-diphosphate + anthranilate</text>
        <dbReference type="Rhea" id="RHEA:11768"/>
        <dbReference type="ChEBI" id="CHEBI:16567"/>
        <dbReference type="ChEBI" id="CHEBI:18277"/>
        <dbReference type="ChEBI" id="CHEBI:33019"/>
        <dbReference type="ChEBI" id="CHEBI:58017"/>
        <dbReference type="EC" id="2.4.2.18"/>
    </reaction>
</comment>
<comment type="cofactor">
    <cofactor evidence="1">
        <name>Mg(2+)</name>
        <dbReference type="ChEBI" id="CHEBI:18420"/>
    </cofactor>
    <text evidence="1">Binds 2 magnesium ions per monomer.</text>
</comment>
<comment type="pathway">
    <text evidence="1">Amino-acid biosynthesis; L-tryptophan biosynthesis; L-tryptophan from chorismate: step 2/5.</text>
</comment>
<comment type="subunit">
    <text evidence="1">Homodimer.</text>
</comment>
<comment type="similarity">
    <text evidence="1">Belongs to the anthranilate phosphoribosyltransferase family.</text>
</comment>
<reference key="1">
    <citation type="journal article" date="2011" name="Stand. Genomic Sci.">
        <title>Complete genome sequence of the filamentous gliding predatory bacterium Herpetosiphon aurantiacus type strain (114-95(T)).</title>
        <authorList>
            <person name="Kiss H."/>
            <person name="Nett M."/>
            <person name="Domin N."/>
            <person name="Martin K."/>
            <person name="Maresca J.A."/>
            <person name="Copeland A."/>
            <person name="Lapidus A."/>
            <person name="Lucas S."/>
            <person name="Berry K.W."/>
            <person name="Glavina Del Rio T."/>
            <person name="Dalin E."/>
            <person name="Tice H."/>
            <person name="Pitluck S."/>
            <person name="Richardson P."/>
            <person name="Bruce D."/>
            <person name="Goodwin L."/>
            <person name="Han C."/>
            <person name="Detter J.C."/>
            <person name="Schmutz J."/>
            <person name="Brettin T."/>
            <person name="Land M."/>
            <person name="Hauser L."/>
            <person name="Kyrpides N.C."/>
            <person name="Ivanova N."/>
            <person name="Goeker M."/>
            <person name="Woyke T."/>
            <person name="Klenk H.P."/>
            <person name="Bryant D.A."/>
        </authorList>
    </citation>
    <scope>NUCLEOTIDE SEQUENCE [LARGE SCALE GENOMIC DNA]</scope>
    <source>
        <strain>ATCC 23779 / DSM 785 / 114-95</strain>
    </source>
</reference>